<feature type="chain" id="PRO_0000207910" description="Protein PsbN">
    <location>
        <begin position="1"/>
        <end position="43"/>
    </location>
</feature>
<feature type="transmembrane region" description="Helical" evidence="1">
    <location>
        <begin position="5"/>
        <end position="27"/>
    </location>
</feature>
<comment type="function">
    <text evidence="1">May play a role in photosystem I and II biogenesis.</text>
</comment>
<comment type="subcellular location">
    <subcellularLocation>
        <location evidence="1">Plastid</location>
        <location evidence="1">Chloroplast thylakoid membrane</location>
        <topology evidence="1">Single-pass membrane protein</topology>
    </subcellularLocation>
</comment>
<comment type="similarity">
    <text evidence="1">Belongs to the PsbN family.</text>
</comment>
<comment type="caution">
    <text evidence="1">Originally thought to be a component of PSII; based on experiments in Synechocystis, N.tabacum and barley, and its absence from PSII in T.elongatus and T.vulcanus, this is probably not true.</text>
</comment>
<comment type="sequence caution" evidence="2">
    <conflict type="erroneous initiation">
        <sequence resource="EMBL-CDS" id="AAQ03662"/>
    </conflict>
    <text>Extended N-terminus.</text>
</comment>
<proteinExistence type="inferred from homology"/>
<accession>Q71P68</accession>
<evidence type="ECO:0000255" key="1">
    <source>
        <dbReference type="HAMAP-Rule" id="MF_00293"/>
    </source>
</evidence>
<evidence type="ECO:0000305" key="2"/>
<organism>
    <name type="scientific">Hypnum cupressiforme</name>
    <name type="common">Cypress-leaved plait-moss</name>
    <dbReference type="NCBI Taxonomy" id="53011"/>
    <lineage>
        <taxon>Eukaryota</taxon>
        <taxon>Viridiplantae</taxon>
        <taxon>Streptophyta</taxon>
        <taxon>Embryophyta</taxon>
        <taxon>Bryophyta</taxon>
        <taxon>Bryophytina</taxon>
        <taxon>Bryopsida</taxon>
        <taxon>Bryidae</taxon>
        <taxon>Hypnanae</taxon>
        <taxon>Hypnales</taxon>
        <taxon>Hypnaceae</taxon>
        <taxon>Hypnum</taxon>
    </lineage>
</organism>
<name>PSBN_HYPCP</name>
<protein>
    <recommendedName>
        <fullName evidence="1">Protein PsbN</fullName>
    </recommendedName>
</protein>
<sequence>METATLVAIFISCSLVSFTGYALYTAFGQPSKELRDPFEEHED</sequence>
<geneLocation type="chloroplast"/>
<gene>
    <name evidence="1" type="primary">psbN</name>
</gene>
<keyword id="KW-0150">Chloroplast</keyword>
<keyword id="KW-0472">Membrane</keyword>
<keyword id="KW-0934">Plastid</keyword>
<keyword id="KW-0793">Thylakoid</keyword>
<keyword id="KW-0812">Transmembrane</keyword>
<keyword id="KW-1133">Transmembrane helix</keyword>
<reference key="1">
    <citation type="submission" date="2001-09" db="EMBL/GenBank/DDBJ databases">
        <title>Phylogeny of moss family Brachytheciaceae based on morphological and molecular trnL-F, ITS2 and psbT-H data.</title>
        <authorList>
            <person name="Huttunen S."/>
            <person name="Ignatov M.S."/>
        </authorList>
    </citation>
    <scope>NUCLEOTIDE SEQUENCE [GENOMIC DNA]</scope>
</reference>
<dbReference type="EMBL" id="AF417361">
    <property type="protein sequence ID" value="AAQ03662.1"/>
    <property type="status" value="ALT_INIT"/>
    <property type="molecule type" value="Genomic_DNA"/>
</dbReference>
<dbReference type="SMR" id="Q71P68"/>
<dbReference type="GO" id="GO:0009535">
    <property type="term" value="C:chloroplast thylakoid membrane"/>
    <property type="evidence" value="ECO:0007669"/>
    <property type="project" value="UniProtKB-SubCell"/>
</dbReference>
<dbReference type="GO" id="GO:0015979">
    <property type="term" value="P:photosynthesis"/>
    <property type="evidence" value="ECO:0007669"/>
    <property type="project" value="InterPro"/>
</dbReference>
<dbReference type="HAMAP" id="MF_00293">
    <property type="entry name" value="PSII_PsbN"/>
    <property type="match status" value="1"/>
</dbReference>
<dbReference type="InterPro" id="IPR003398">
    <property type="entry name" value="PSII_PsbN"/>
</dbReference>
<dbReference type="PANTHER" id="PTHR35326">
    <property type="entry name" value="PROTEIN PSBN"/>
    <property type="match status" value="1"/>
</dbReference>
<dbReference type="PANTHER" id="PTHR35326:SF3">
    <property type="entry name" value="PROTEIN PSBN"/>
    <property type="match status" value="1"/>
</dbReference>
<dbReference type="Pfam" id="PF02468">
    <property type="entry name" value="PsbN"/>
    <property type="match status" value="1"/>
</dbReference>